<protein>
    <recommendedName>
        <fullName evidence="1">Large ribosomal subunit protein uL2c</fullName>
    </recommendedName>
    <alternativeName>
        <fullName evidence="3">50S ribosomal protein L2, chloroplastic</fullName>
    </alternativeName>
</protein>
<dbReference type="EMBL" id="Z67753">
    <property type="protein sequence ID" value="CAA91646.1"/>
    <property type="molecule type" value="Genomic_DNA"/>
</dbReference>
<dbReference type="PIR" id="S78273">
    <property type="entry name" value="S78273"/>
</dbReference>
<dbReference type="RefSeq" id="NP_043614.1">
    <property type="nucleotide sequence ID" value="NC_001713.1"/>
</dbReference>
<dbReference type="SMR" id="P49545"/>
<dbReference type="GeneID" id="801779"/>
<dbReference type="GO" id="GO:0009507">
    <property type="term" value="C:chloroplast"/>
    <property type="evidence" value="ECO:0007669"/>
    <property type="project" value="UniProtKB-SubCell"/>
</dbReference>
<dbReference type="GO" id="GO:0005762">
    <property type="term" value="C:mitochondrial large ribosomal subunit"/>
    <property type="evidence" value="ECO:0007669"/>
    <property type="project" value="TreeGrafter"/>
</dbReference>
<dbReference type="GO" id="GO:0019843">
    <property type="term" value="F:rRNA binding"/>
    <property type="evidence" value="ECO:0007669"/>
    <property type="project" value="UniProtKB-UniRule"/>
</dbReference>
<dbReference type="GO" id="GO:0003735">
    <property type="term" value="F:structural constituent of ribosome"/>
    <property type="evidence" value="ECO:0007669"/>
    <property type="project" value="InterPro"/>
</dbReference>
<dbReference type="GO" id="GO:0016740">
    <property type="term" value="F:transferase activity"/>
    <property type="evidence" value="ECO:0007669"/>
    <property type="project" value="InterPro"/>
</dbReference>
<dbReference type="GO" id="GO:0032543">
    <property type="term" value="P:mitochondrial translation"/>
    <property type="evidence" value="ECO:0007669"/>
    <property type="project" value="TreeGrafter"/>
</dbReference>
<dbReference type="FunFam" id="2.30.30.30:FF:000001">
    <property type="entry name" value="50S ribosomal protein L2"/>
    <property type="match status" value="1"/>
</dbReference>
<dbReference type="FunFam" id="2.40.50.140:FF:000003">
    <property type="entry name" value="50S ribosomal protein L2"/>
    <property type="match status" value="1"/>
</dbReference>
<dbReference type="FunFam" id="4.10.950.10:FF:000001">
    <property type="entry name" value="50S ribosomal protein L2"/>
    <property type="match status" value="1"/>
</dbReference>
<dbReference type="Gene3D" id="2.30.30.30">
    <property type="match status" value="1"/>
</dbReference>
<dbReference type="Gene3D" id="2.40.50.140">
    <property type="entry name" value="Nucleic acid-binding proteins"/>
    <property type="match status" value="1"/>
</dbReference>
<dbReference type="Gene3D" id="4.10.950.10">
    <property type="entry name" value="Ribosomal protein L2, domain 3"/>
    <property type="match status" value="1"/>
</dbReference>
<dbReference type="HAMAP" id="MF_01320_B">
    <property type="entry name" value="Ribosomal_uL2_B"/>
    <property type="match status" value="1"/>
</dbReference>
<dbReference type="InterPro" id="IPR012340">
    <property type="entry name" value="NA-bd_OB-fold"/>
</dbReference>
<dbReference type="InterPro" id="IPR014722">
    <property type="entry name" value="Rib_uL2_dom2"/>
</dbReference>
<dbReference type="InterPro" id="IPR002171">
    <property type="entry name" value="Ribosomal_uL2"/>
</dbReference>
<dbReference type="InterPro" id="IPR005880">
    <property type="entry name" value="Ribosomal_uL2_bac/org-type"/>
</dbReference>
<dbReference type="InterPro" id="IPR022669">
    <property type="entry name" value="Ribosomal_uL2_C"/>
</dbReference>
<dbReference type="InterPro" id="IPR022671">
    <property type="entry name" value="Ribosomal_uL2_CS"/>
</dbReference>
<dbReference type="InterPro" id="IPR014726">
    <property type="entry name" value="Ribosomal_uL2_dom3"/>
</dbReference>
<dbReference type="InterPro" id="IPR022666">
    <property type="entry name" value="Ribosomal_uL2_RNA-bd_dom"/>
</dbReference>
<dbReference type="InterPro" id="IPR008991">
    <property type="entry name" value="Translation_prot_SH3-like_sf"/>
</dbReference>
<dbReference type="NCBIfam" id="TIGR01171">
    <property type="entry name" value="rplB_bact"/>
    <property type="match status" value="1"/>
</dbReference>
<dbReference type="PANTHER" id="PTHR13691:SF5">
    <property type="entry name" value="LARGE RIBOSOMAL SUBUNIT PROTEIN UL2M"/>
    <property type="match status" value="1"/>
</dbReference>
<dbReference type="PANTHER" id="PTHR13691">
    <property type="entry name" value="RIBOSOMAL PROTEIN L2"/>
    <property type="match status" value="1"/>
</dbReference>
<dbReference type="Pfam" id="PF00181">
    <property type="entry name" value="Ribosomal_L2"/>
    <property type="match status" value="1"/>
</dbReference>
<dbReference type="Pfam" id="PF03947">
    <property type="entry name" value="Ribosomal_L2_C"/>
    <property type="match status" value="1"/>
</dbReference>
<dbReference type="PIRSF" id="PIRSF002158">
    <property type="entry name" value="Ribosomal_L2"/>
    <property type="match status" value="1"/>
</dbReference>
<dbReference type="SMART" id="SM01383">
    <property type="entry name" value="Ribosomal_L2"/>
    <property type="match status" value="1"/>
</dbReference>
<dbReference type="SMART" id="SM01382">
    <property type="entry name" value="Ribosomal_L2_C"/>
    <property type="match status" value="1"/>
</dbReference>
<dbReference type="SUPFAM" id="SSF50249">
    <property type="entry name" value="Nucleic acid-binding proteins"/>
    <property type="match status" value="1"/>
</dbReference>
<dbReference type="SUPFAM" id="SSF50104">
    <property type="entry name" value="Translation proteins SH3-like domain"/>
    <property type="match status" value="1"/>
</dbReference>
<dbReference type="PROSITE" id="PS00467">
    <property type="entry name" value="RIBOSOMAL_L2"/>
    <property type="match status" value="1"/>
</dbReference>
<gene>
    <name type="primary">rpl2</name>
</gene>
<accession>P49545</accession>
<feature type="chain" id="PRO_0000129687" description="Large ribosomal subunit protein uL2c">
    <location>
        <begin position="1"/>
        <end position="275"/>
    </location>
</feature>
<feature type="region of interest" description="Disordered" evidence="2">
    <location>
        <begin position="219"/>
        <end position="255"/>
    </location>
</feature>
<comment type="subunit">
    <text>Part of the 50S ribosomal subunit.</text>
</comment>
<comment type="subcellular location">
    <subcellularLocation>
        <location>Plastid</location>
        <location>Chloroplast</location>
    </subcellularLocation>
</comment>
<comment type="similarity">
    <text evidence="3">Belongs to the universal ribosomal protein uL2 family.</text>
</comment>
<evidence type="ECO:0000255" key="1">
    <source>
        <dbReference type="HAMAP-Rule" id="MF_01320"/>
    </source>
</evidence>
<evidence type="ECO:0000256" key="2">
    <source>
        <dbReference type="SAM" id="MobiDB-lite"/>
    </source>
</evidence>
<evidence type="ECO:0000305" key="3"/>
<reference key="1">
    <citation type="journal article" date="1995" name="Plant Mol. Biol. Rep.">
        <title>The chloroplast genome of a chlorophyll a+c-containing alga, Odontella sinensis.</title>
        <authorList>
            <person name="Kowallik K.V."/>
            <person name="Stoebe B."/>
            <person name="Schaffran I."/>
            <person name="Kroth-Pancic P."/>
            <person name="Freier U."/>
        </authorList>
    </citation>
    <scope>NUCLEOTIDE SEQUENCE [LARGE SCALE GENOMIC DNA]</scope>
</reference>
<sequence length="275" mass="30626">MSIRLYKSYTPGTRNRALSSFTEITKTKPEKSLIQKNHRSKGRNNRGVITIRHRGGGHKRRYRIIDFGRKKHNVEGVVAAIEYDPNRNARIALLHYTDGEKRYILHPNNLNVGDRVVSGMEAELVIGNALPLEKIPLGASVHNIELIPNRGGQIVRAAGTSAKILAKEGDYVTLRLPSKEIRLIRKECFATIGEVSNNDAFLVQSGKAGRTRWLGKRPTVRGSVMNPCDHPHGGGEGRAPIGRTRPLTPWGKPALGIKTRKNKKASDAYILRRRS</sequence>
<geneLocation type="chloroplast"/>
<keyword id="KW-0150">Chloroplast</keyword>
<keyword id="KW-0934">Plastid</keyword>
<keyword id="KW-0687">Ribonucleoprotein</keyword>
<keyword id="KW-0689">Ribosomal protein</keyword>
<proteinExistence type="inferred from homology"/>
<name>RK2_TRICV</name>
<organism>
    <name type="scientific">Trieres chinensis</name>
    <name type="common">Marine centric diatom</name>
    <name type="synonym">Odontella sinensis</name>
    <dbReference type="NCBI Taxonomy" id="1514140"/>
    <lineage>
        <taxon>Eukaryota</taxon>
        <taxon>Sar</taxon>
        <taxon>Stramenopiles</taxon>
        <taxon>Ochrophyta</taxon>
        <taxon>Bacillariophyta</taxon>
        <taxon>Mediophyceae</taxon>
        <taxon>Biddulphiophycidae</taxon>
        <taxon>Eupodiscales</taxon>
        <taxon>Parodontellaceae</taxon>
        <taxon>Trieres</taxon>
    </lineage>
</organism>